<name>RSMG_UREPA</name>
<keyword id="KW-0963">Cytoplasm</keyword>
<keyword id="KW-0489">Methyltransferase</keyword>
<keyword id="KW-1185">Reference proteome</keyword>
<keyword id="KW-0698">rRNA processing</keyword>
<keyword id="KW-0949">S-adenosyl-L-methionine</keyword>
<keyword id="KW-0808">Transferase</keyword>
<feature type="chain" id="PRO_0000184361" description="Ribosomal RNA small subunit methyltransferase G">
    <location>
        <begin position="1"/>
        <end position="214"/>
    </location>
</feature>
<feature type="binding site" evidence="1">
    <location>
        <position position="58"/>
    </location>
    <ligand>
        <name>S-adenosyl-L-methionine</name>
        <dbReference type="ChEBI" id="CHEBI:59789"/>
    </ligand>
</feature>
<feature type="binding site" evidence="1">
    <location>
        <begin position="109"/>
        <end position="110"/>
    </location>
    <ligand>
        <name>S-adenosyl-L-methionine</name>
        <dbReference type="ChEBI" id="CHEBI:59789"/>
    </ligand>
</feature>
<feature type="binding site" evidence="1">
    <location>
        <position position="126"/>
    </location>
    <ligand>
        <name>S-adenosyl-L-methionine</name>
        <dbReference type="ChEBI" id="CHEBI:59789"/>
    </ligand>
</feature>
<dbReference type="EC" id="2.1.1.-" evidence="1"/>
<dbReference type="EMBL" id="AF222894">
    <property type="protein sequence ID" value="AAF30445.1"/>
    <property type="molecule type" value="Genomic_DNA"/>
</dbReference>
<dbReference type="SMR" id="Q9PRA5"/>
<dbReference type="STRING" id="273119.UU040"/>
<dbReference type="EnsemblBacteria" id="AAF30445">
    <property type="protein sequence ID" value="AAF30445"/>
    <property type="gene ID" value="UU040"/>
</dbReference>
<dbReference type="KEGG" id="uur:UU040"/>
<dbReference type="eggNOG" id="COG0357">
    <property type="taxonomic scope" value="Bacteria"/>
</dbReference>
<dbReference type="HOGENOM" id="CLU_065341_0_1_14"/>
<dbReference type="Proteomes" id="UP000000423">
    <property type="component" value="Chromosome"/>
</dbReference>
<dbReference type="GO" id="GO:0005829">
    <property type="term" value="C:cytosol"/>
    <property type="evidence" value="ECO:0007669"/>
    <property type="project" value="TreeGrafter"/>
</dbReference>
<dbReference type="GO" id="GO:0070043">
    <property type="term" value="F:rRNA (guanine-N7-)-methyltransferase activity"/>
    <property type="evidence" value="ECO:0007669"/>
    <property type="project" value="UniProtKB-UniRule"/>
</dbReference>
<dbReference type="CDD" id="cd02440">
    <property type="entry name" value="AdoMet_MTases"/>
    <property type="match status" value="1"/>
</dbReference>
<dbReference type="Gene3D" id="3.40.50.150">
    <property type="entry name" value="Vaccinia Virus protein VP39"/>
    <property type="match status" value="1"/>
</dbReference>
<dbReference type="HAMAP" id="MF_00074">
    <property type="entry name" value="16SrRNA_methyltr_G"/>
    <property type="match status" value="1"/>
</dbReference>
<dbReference type="InterPro" id="IPR003682">
    <property type="entry name" value="rRNA_ssu_MeTfrase_G"/>
</dbReference>
<dbReference type="InterPro" id="IPR029063">
    <property type="entry name" value="SAM-dependent_MTases_sf"/>
</dbReference>
<dbReference type="NCBIfam" id="TIGR00138">
    <property type="entry name" value="rsmG_gidB"/>
    <property type="match status" value="1"/>
</dbReference>
<dbReference type="PANTHER" id="PTHR31760">
    <property type="entry name" value="S-ADENOSYL-L-METHIONINE-DEPENDENT METHYLTRANSFERASES SUPERFAMILY PROTEIN"/>
    <property type="match status" value="1"/>
</dbReference>
<dbReference type="PANTHER" id="PTHR31760:SF0">
    <property type="entry name" value="S-ADENOSYL-L-METHIONINE-DEPENDENT METHYLTRANSFERASES SUPERFAMILY PROTEIN"/>
    <property type="match status" value="1"/>
</dbReference>
<dbReference type="Pfam" id="PF02527">
    <property type="entry name" value="GidB"/>
    <property type="match status" value="1"/>
</dbReference>
<dbReference type="SUPFAM" id="SSF53335">
    <property type="entry name" value="S-adenosyl-L-methionine-dependent methyltransferases"/>
    <property type="match status" value="1"/>
</dbReference>
<sequence length="214" mass="25017">MSFEKYKTIIQKYNQIFNLTRLDSDDKIYQNFFLDSLAPYKELDFFTQNTNLKLIDIGSGSGIPGVVLKIIFKNLNLTLLEANQKRCEFLKILTQELGLNDVLIWNMRAEDLTQSMRESFDIATSRAVASLDKILEISAAFVKVNGYLIQPKSIKFYEEELKAKNIIKTLYLERIALKDFWENDYHHLVGVYLKKQITPLQFPRPWNLILKKPL</sequence>
<proteinExistence type="inferred from homology"/>
<gene>
    <name evidence="1" type="primary">rsmG</name>
    <name type="ordered locus">UU040</name>
</gene>
<comment type="function">
    <text evidence="1">Specifically methylates the N7 position of a guanine in 16S rRNA.</text>
</comment>
<comment type="subcellular location">
    <subcellularLocation>
        <location evidence="1">Cytoplasm</location>
    </subcellularLocation>
</comment>
<comment type="similarity">
    <text evidence="1">Belongs to the methyltransferase superfamily. RNA methyltransferase RsmG family.</text>
</comment>
<evidence type="ECO:0000255" key="1">
    <source>
        <dbReference type="HAMAP-Rule" id="MF_00074"/>
    </source>
</evidence>
<reference key="1">
    <citation type="journal article" date="2000" name="Nature">
        <title>The complete sequence of the mucosal pathogen Ureaplasma urealyticum.</title>
        <authorList>
            <person name="Glass J.I."/>
            <person name="Lefkowitz E.J."/>
            <person name="Glass J.S."/>
            <person name="Heiner C.R."/>
            <person name="Chen E.Y."/>
            <person name="Cassell G.H."/>
        </authorList>
    </citation>
    <scope>NUCLEOTIDE SEQUENCE [LARGE SCALE GENOMIC DNA]</scope>
    <source>
        <strain>ATCC 700970</strain>
    </source>
</reference>
<accession>Q9PRA5</accession>
<organism>
    <name type="scientific">Ureaplasma parvum serovar 3 (strain ATCC 700970)</name>
    <dbReference type="NCBI Taxonomy" id="273119"/>
    <lineage>
        <taxon>Bacteria</taxon>
        <taxon>Bacillati</taxon>
        <taxon>Mycoplasmatota</taxon>
        <taxon>Mycoplasmoidales</taxon>
        <taxon>Mycoplasmoidaceae</taxon>
        <taxon>Ureaplasma</taxon>
    </lineage>
</organism>
<protein>
    <recommendedName>
        <fullName evidence="1">Ribosomal RNA small subunit methyltransferase G</fullName>
        <ecNumber evidence="1">2.1.1.-</ecNumber>
    </recommendedName>
    <alternativeName>
        <fullName evidence="1">16S rRNA 7-methylguanosine methyltransferase</fullName>
        <shortName evidence="1">16S rRNA m7G methyltransferase</shortName>
    </alternativeName>
</protein>